<name>TARL_BACSH</name>
<organism>
    <name type="scientific">Bacillus spizizenii (strain ATCC 23059 / NRRL B-14472 / W23)</name>
    <name type="common">Bacillus subtilis subsp. spizizenii</name>
    <dbReference type="NCBI Taxonomy" id="655816"/>
    <lineage>
        <taxon>Bacteria</taxon>
        <taxon>Bacillati</taxon>
        <taxon>Bacillota</taxon>
        <taxon>Bacilli</taxon>
        <taxon>Bacillales</taxon>
        <taxon>Bacillaceae</taxon>
        <taxon>Bacillus</taxon>
    </lineage>
</organism>
<protein>
    <recommendedName>
        <fullName evidence="2">Teichoic acid poly(ribitol-phosphate) polymerase</fullName>
        <ecNumber evidence="1">2.7.8.47</ecNumber>
    </recommendedName>
    <alternativeName>
        <fullName>Poly(ribitol phosphate) polymerase</fullName>
    </alternativeName>
    <alternativeName>
        <fullName>Tar polymerase</fullName>
    </alternativeName>
</protein>
<dbReference type="EC" id="2.7.8.47" evidence="1"/>
<dbReference type="EMBL" id="AJ313428">
    <property type="protein sequence ID" value="CAC86106.1"/>
    <property type="molecule type" value="Genomic_DNA"/>
</dbReference>
<dbReference type="EMBL" id="AM260209">
    <property type="protein sequence ID" value="CAJ97393.1"/>
    <property type="molecule type" value="Genomic_DNA"/>
</dbReference>
<dbReference type="EMBL" id="CP002183">
    <property type="protein sequence ID" value="ADM39551.1"/>
    <property type="molecule type" value="Genomic_DNA"/>
</dbReference>
<dbReference type="SMR" id="Q8RKJ2"/>
<dbReference type="KEGG" id="bss:BSUW23_17580"/>
<dbReference type="HOGENOM" id="CLU_029598_3_1_9"/>
<dbReference type="BioCyc" id="MetaCyc:MONOMER-19965"/>
<dbReference type="BRENDA" id="2.7.8.47">
    <property type="organism ID" value="658"/>
</dbReference>
<dbReference type="UniPathway" id="UPA00790"/>
<dbReference type="Proteomes" id="UP000002233">
    <property type="component" value="Chromosome"/>
</dbReference>
<dbReference type="GO" id="GO:0005886">
    <property type="term" value="C:plasma membrane"/>
    <property type="evidence" value="ECO:0007669"/>
    <property type="project" value="UniProtKB-SubCell"/>
</dbReference>
<dbReference type="GO" id="GO:0047355">
    <property type="term" value="F:CDP-glycerol glycerophosphotransferase activity"/>
    <property type="evidence" value="ECO:0007669"/>
    <property type="project" value="InterPro"/>
</dbReference>
<dbReference type="GO" id="GO:0071555">
    <property type="term" value="P:cell wall organization"/>
    <property type="evidence" value="ECO:0007669"/>
    <property type="project" value="UniProtKB-KW"/>
</dbReference>
<dbReference type="GO" id="GO:0019350">
    <property type="term" value="P:teichoic acid biosynthetic process"/>
    <property type="evidence" value="ECO:0007669"/>
    <property type="project" value="UniProtKB-KW"/>
</dbReference>
<dbReference type="Gene3D" id="3.40.50.11820">
    <property type="match status" value="1"/>
</dbReference>
<dbReference type="Gene3D" id="3.40.50.12580">
    <property type="match status" value="1"/>
</dbReference>
<dbReference type="InterPro" id="IPR007554">
    <property type="entry name" value="Glycerophosphate_synth"/>
</dbReference>
<dbReference type="InterPro" id="IPR043148">
    <property type="entry name" value="TagF_C"/>
</dbReference>
<dbReference type="InterPro" id="IPR043149">
    <property type="entry name" value="TagF_N"/>
</dbReference>
<dbReference type="InterPro" id="IPR051612">
    <property type="entry name" value="Teichoic_Acid_Biosynth"/>
</dbReference>
<dbReference type="PANTHER" id="PTHR37316">
    <property type="entry name" value="TEICHOIC ACID GLYCEROL-PHOSPHATE PRIMASE"/>
    <property type="match status" value="1"/>
</dbReference>
<dbReference type="PANTHER" id="PTHR37316:SF2">
    <property type="entry name" value="TEICHOIC ACID RIBITOL-PHOSPHATE POLYMERASE TARK"/>
    <property type="match status" value="1"/>
</dbReference>
<dbReference type="Pfam" id="PF04464">
    <property type="entry name" value="Glyphos_transf"/>
    <property type="match status" value="1"/>
</dbReference>
<dbReference type="SUPFAM" id="SSF53756">
    <property type="entry name" value="UDP-Glycosyltransferase/glycogen phosphorylase"/>
    <property type="match status" value="1"/>
</dbReference>
<evidence type="ECO:0000269" key="1">
    <source>
    </source>
</evidence>
<evidence type="ECO:0000305" key="2"/>
<feature type="chain" id="PRO_0000208451" description="Teichoic acid poly(ribitol-phosphate) polymerase">
    <location>
        <begin position="1"/>
        <end position="619"/>
    </location>
</feature>
<proteinExistence type="evidence at protein level"/>
<accession>Q8RKJ2</accession>
<accession>B7ZDK4</accession>
<accession>E0U4Y0</accession>
<reference key="1">
    <citation type="journal article" date="2002" name="Microbiology">
        <title>Comparison of ribitol and glycerol teichoic acid genes in Bacillus subtilis W23 and 168: identical function, similar divergent organization, but different regulation.</title>
        <authorList>
            <person name="Lazarevic V."/>
            <person name="Abellan F.-X."/>
            <person name="Beggah Moeller S."/>
            <person name="Karamata D."/>
            <person name="Maueel C."/>
        </authorList>
    </citation>
    <scope>NUCLEOTIDE SEQUENCE [GENOMIC DNA]</scope>
    <source>
        <strain>ATCC 23059 / NRRL B-14472 / W23</strain>
    </source>
</reference>
<reference key="2">
    <citation type="submission" date="2006-04" db="EMBL/GenBank/DDBJ databases">
        <title>Minor teichoic acid of Bacillus subtilis W23.</title>
        <authorList>
            <person name="Soldo B."/>
            <person name="Freymond P.P."/>
            <person name="Karamata D."/>
            <person name="Lazarevic V."/>
        </authorList>
    </citation>
    <scope>NUCLEOTIDE SEQUENCE [GENOMIC DNA]</scope>
    <source>
        <strain>ATCC 23059 / NRRL B-14472 / W23</strain>
    </source>
</reference>
<reference key="3">
    <citation type="journal article" date="2011" name="Microbiology">
        <title>The genome sequence of Bacillus subtilis subsp. spizizenii W23: insights into speciation within the B. subtilis complex and into the history of B. subtilis genetics.</title>
        <authorList>
            <person name="Zeigler D.R."/>
        </authorList>
    </citation>
    <scope>NUCLEOTIDE SEQUENCE [LARGE SCALE GENOMIC DNA]</scope>
    <source>
        <strain>ATCC 23059 / NRRL B-14472 / W23</strain>
    </source>
</reference>
<reference key="4">
    <citation type="journal article" date="2010" name="Chem. Biol.">
        <title>Staphylococcus aureus and Bacillus subtilis W23 make polyribitol wall teichoic acids using different enzymatic pathways.</title>
        <authorList>
            <person name="Brown S."/>
            <person name="Meredith T."/>
            <person name="Swoboda J."/>
            <person name="Walker S."/>
        </authorList>
    </citation>
    <scope>FUNCTION</scope>
    <scope>CATALYTIC ACTIVITY</scope>
    <scope>PATHWAY</scope>
    <source>
        <strain>ATCC 23059 / NRRL B-14472 / W23</strain>
    </source>
</reference>
<reference key="5">
    <citation type="journal article" date="2013" name="Annu. Rev. Microbiol.">
        <title>Wall teichoic acids of gram-positive bacteria.</title>
        <authorList>
            <person name="Brown S."/>
            <person name="Santa Maria J.P. Jr."/>
            <person name="Walker S."/>
        </authorList>
    </citation>
    <scope>REVIEW</scope>
</reference>
<keyword id="KW-1003">Cell membrane</keyword>
<keyword id="KW-0961">Cell wall biogenesis/degradation</keyword>
<keyword id="KW-0472">Membrane</keyword>
<keyword id="KW-0777">Teichoic acid biosynthesis</keyword>
<keyword id="KW-0808">Transferase</keyword>
<gene>
    <name type="primary">tarL</name>
    <name type="ordered locus">BSUW23_17580</name>
</gene>
<comment type="function">
    <text evidence="1">Responsible for the polymerization of the main chain of the major teichoic acid by sequential transfer of ribitol phosphate units from CDP-ribitol to the glycerol phosphate attached to the disaccharide linkage unit. Synthesizes polymers of up to 40 ribitol phosphate units in length.</text>
</comment>
<comment type="catalytic activity">
    <reaction evidence="1">
        <text>4-O-[1-D-ribitylphospho-(2R)-1-glycerylphospho]-N-acetyl-beta-D-mannosaminyl-(1-&gt;4)-N-acetyl-alpha-D-glucosaminyl di-trans,octa-cis-undecaprenyl diphosphate + n CDP-L-ribitol = 4-O-[(D-ribitylphospho)(n)-D-ribitylphospho-(2R)-glycerylphospho]-N-acetyl-beta-D-mannosaminyl-(1-&gt;4)-N-acetyl-alpha-D-glucosaminyl di-trans,octa-cis-undecaprenyl diphosphate + n CMP + n H(+)</text>
        <dbReference type="Rhea" id="RHEA:44668"/>
        <dbReference type="Rhea" id="RHEA-COMP:12833"/>
        <dbReference type="ChEBI" id="CHEBI:15378"/>
        <dbReference type="ChEBI" id="CHEBI:57608"/>
        <dbReference type="ChEBI" id="CHEBI:60377"/>
        <dbReference type="ChEBI" id="CHEBI:133892"/>
        <dbReference type="ChEBI" id="CHEBI:133894"/>
        <dbReference type="EC" id="2.7.8.47"/>
    </reaction>
</comment>
<comment type="pathway">
    <text evidence="1">Cell wall biogenesis; poly(ribitol phosphate) teichoic acid biosynthesis.</text>
</comment>
<comment type="subcellular location">
    <subcellularLocation>
        <location evidence="2">Cell membrane</location>
        <topology evidence="2">Peripheral membrane protein</topology>
    </subcellularLocation>
</comment>
<comment type="similarity">
    <text evidence="2">Belongs to the CDP-glycerol glycerophosphotransferase family.</text>
</comment>
<sequence>MKLARKIKNRLFRSKKKTQKENTAVIVHPADNRVFSLFDKTKRIEENQQVPVRKISEFSWNGSILKIAGYMYIKGLPLQKEDQVRKRLLLVNNGVLFTAVSLRDIPVDQLSIDTSNVPGAYKWAGFSQQINFSKLMNDKPLPQGEYKLFLEIEAVDDQNVKHQEVHTVGNVSNFLSNDVYATKMEFHSAKKLMKFNLIVNYDEGEKTINLSCNKLQEIDPSLLELDTGKEANRFIRKLNTSLFHFAYDVFRLLPIKSNKIVFASDSRLDVTGNFEFVYEELLKREENFDFKFFLKSSIRDRKSLSELMSMAYHFATSKIIFIDDFYPIIYPLKIRKNADLVQLWHAVGAFKTFGYSRIGLPGGPSPHSKNHRNYTKVIVSSENIRKHYAEGFGVDIENVIATGVPRTDFFFDEAKKAFVKERLYTEYPFLKDKKVILFAPTFRGNGQQSAHYPFEVLDFDRLYRELKDEYIFLFKIHPFVRNDANIPYQYSDFFYDFSSFREINELLLVTDVLITDYSSVCFEYALLNKPMIFFSYDVDDYIRKRDFYYDYFDFIPGPLAKTSDQMISIIKEEKYNFEQIDSFVHYFFDDLDGKASERVVDQIVFPQEEEPVDDKVLKR</sequence>